<protein>
    <recommendedName>
        <fullName evidence="1">2,3-diketo-L-gulonate reductase</fullName>
        <shortName evidence="1">2,3-DKG reductase</shortName>
        <ecNumber evidence="1">1.1.1.130</ecNumber>
    </recommendedName>
    <alternativeName>
        <fullName evidence="1">3-dehydro-L-gulonate 2-dehydrogenase</fullName>
    </alternativeName>
</protein>
<evidence type="ECO:0000255" key="1">
    <source>
        <dbReference type="HAMAP-Rule" id="MF_00820"/>
    </source>
</evidence>
<keyword id="KW-0963">Cytoplasm</keyword>
<keyword id="KW-0520">NAD</keyword>
<keyword id="KW-0560">Oxidoreductase</keyword>
<sequence>MKVTFEELKGAFYRVLRSRNIAEDTADACAEMFARTTESGVYSHGVNRFPRFIQQLDNGDIIPDAKPQRVTSLGAIEQWDAQRAIGNLTAKKMMDRAIELASDHGIGLVALRNANHWMRGGSYGWQAAEKGYIGICWTNSIAVMPPWGAKECRIGTNPLIVAIPSTPITMVDMSMSMFSYGMLEVNRLAGRELPVDGGFDDNGQLTKEPGVIEKNRRILPMGYWKGSGLSIVLDMIATLLSNGSSVAEVTQENSDEYGVSQIFIAIEVDKLIDGATRDAKLQRIMDFITTAERADDNVAIRLPGHEFTKLLDDNRRHGITIDDSVWAKIQAL</sequence>
<accession>B5EX79</accession>
<comment type="function">
    <text evidence="1">Catalyzes the reduction of 2,3-diketo-L-gulonate in the presence of NADH, to form 3-keto-L-gulonate.</text>
</comment>
<comment type="catalytic activity">
    <reaction evidence="1">
        <text>3-dehydro-L-gulonate + NAD(+) = 2,3-dioxo-L-gulonate + NADH + H(+)</text>
        <dbReference type="Rhea" id="RHEA:21924"/>
        <dbReference type="ChEBI" id="CHEBI:15378"/>
        <dbReference type="ChEBI" id="CHEBI:57441"/>
        <dbReference type="ChEBI" id="CHEBI:57540"/>
        <dbReference type="ChEBI" id="CHEBI:57655"/>
        <dbReference type="ChEBI" id="CHEBI:57945"/>
        <dbReference type="EC" id="1.1.1.130"/>
    </reaction>
</comment>
<comment type="catalytic activity">
    <reaction evidence="1">
        <text>3-dehydro-L-gulonate + NADP(+) = 2,3-dioxo-L-gulonate + NADPH + H(+)</text>
        <dbReference type="Rhea" id="RHEA:21928"/>
        <dbReference type="ChEBI" id="CHEBI:15378"/>
        <dbReference type="ChEBI" id="CHEBI:57441"/>
        <dbReference type="ChEBI" id="CHEBI:57655"/>
        <dbReference type="ChEBI" id="CHEBI:57783"/>
        <dbReference type="ChEBI" id="CHEBI:58349"/>
        <dbReference type="EC" id="1.1.1.130"/>
    </reaction>
</comment>
<comment type="subunit">
    <text evidence="1">Homodimer.</text>
</comment>
<comment type="subcellular location">
    <subcellularLocation>
        <location evidence="1">Cytoplasm</location>
    </subcellularLocation>
</comment>
<comment type="similarity">
    <text evidence="1">Belongs to the LDH2/MDH2 oxidoreductase family. DlgD subfamily.</text>
</comment>
<name>DLGD_SALA4</name>
<reference key="1">
    <citation type="journal article" date="2011" name="J. Bacteriol.">
        <title>Comparative genomics of 28 Salmonella enterica isolates: evidence for CRISPR-mediated adaptive sublineage evolution.</title>
        <authorList>
            <person name="Fricke W.F."/>
            <person name="Mammel M.K."/>
            <person name="McDermott P.F."/>
            <person name="Tartera C."/>
            <person name="White D.G."/>
            <person name="Leclerc J.E."/>
            <person name="Ravel J."/>
            <person name="Cebula T.A."/>
        </authorList>
    </citation>
    <scope>NUCLEOTIDE SEQUENCE [LARGE SCALE GENOMIC DNA]</scope>
    <source>
        <strain>SL483</strain>
    </source>
</reference>
<dbReference type="EC" id="1.1.1.130" evidence="1"/>
<dbReference type="EMBL" id="CP001138">
    <property type="protein sequence ID" value="ACH48748.1"/>
    <property type="molecule type" value="Genomic_DNA"/>
</dbReference>
<dbReference type="SMR" id="B5EX79"/>
<dbReference type="KEGG" id="sea:SeAg_B3882"/>
<dbReference type="HOGENOM" id="CLU_040452_4_0_6"/>
<dbReference type="Proteomes" id="UP000008819">
    <property type="component" value="Chromosome"/>
</dbReference>
<dbReference type="GO" id="GO:0005737">
    <property type="term" value="C:cytoplasm"/>
    <property type="evidence" value="ECO:0007669"/>
    <property type="project" value="UniProtKB-SubCell"/>
</dbReference>
<dbReference type="GO" id="GO:0047559">
    <property type="term" value="F:3-dehydro-L-gulonate 2-dehydrogenase activity"/>
    <property type="evidence" value="ECO:0007669"/>
    <property type="project" value="UniProtKB-UniRule"/>
</dbReference>
<dbReference type="GO" id="GO:0070403">
    <property type="term" value="F:NAD+ binding"/>
    <property type="evidence" value="ECO:0007669"/>
    <property type="project" value="InterPro"/>
</dbReference>
<dbReference type="Gene3D" id="1.10.1530.10">
    <property type="match status" value="1"/>
</dbReference>
<dbReference type="Gene3D" id="3.30.1370.60">
    <property type="entry name" value="Hypothetical oxidoreductase yiak, domain 2"/>
    <property type="match status" value="1"/>
</dbReference>
<dbReference type="Gene3D" id="3.30.60.50">
    <property type="entry name" value="Hypothetical oxidoreductase yiak, domain 3"/>
    <property type="match status" value="1"/>
</dbReference>
<dbReference type="HAMAP" id="MF_00820">
    <property type="entry name" value="Diketo_gul_reduc"/>
    <property type="match status" value="1"/>
</dbReference>
<dbReference type="InterPro" id="IPR023689">
    <property type="entry name" value="Diketo_gul_Rdtase"/>
</dbReference>
<dbReference type="InterPro" id="IPR043144">
    <property type="entry name" value="Mal/L-sulf/L-lact_DH-like_ah"/>
</dbReference>
<dbReference type="InterPro" id="IPR043143">
    <property type="entry name" value="Mal/L-sulf/L-lact_DH-like_NADP"/>
</dbReference>
<dbReference type="InterPro" id="IPR036111">
    <property type="entry name" value="Mal/L-sulfo/L-lacto_DH-like_sf"/>
</dbReference>
<dbReference type="InterPro" id="IPR003767">
    <property type="entry name" value="Malate/L-lactate_DH-like"/>
</dbReference>
<dbReference type="NCBIfam" id="NF009750">
    <property type="entry name" value="PRK13260.1"/>
    <property type="match status" value="1"/>
</dbReference>
<dbReference type="PANTHER" id="PTHR11091:SF3">
    <property type="entry name" value="2,3-DIKETO-L-GULONATE REDUCTASE"/>
    <property type="match status" value="1"/>
</dbReference>
<dbReference type="PANTHER" id="PTHR11091">
    <property type="entry name" value="OXIDOREDUCTASE-RELATED"/>
    <property type="match status" value="1"/>
</dbReference>
<dbReference type="Pfam" id="PF02615">
    <property type="entry name" value="Ldh_2"/>
    <property type="match status" value="1"/>
</dbReference>
<dbReference type="SUPFAM" id="SSF89733">
    <property type="entry name" value="L-sulfolactate dehydrogenase-like"/>
    <property type="match status" value="1"/>
</dbReference>
<feature type="chain" id="PRO_1000134346" description="2,3-diketo-L-gulonate reductase">
    <location>
        <begin position="1"/>
        <end position="332"/>
    </location>
</feature>
<feature type="active site" description="Proton donor" evidence="1">
    <location>
        <position position="44"/>
    </location>
</feature>
<feature type="binding site" evidence="1">
    <location>
        <begin position="168"/>
        <end position="174"/>
    </location>
    <ligand>
        <name>NAD(+)</name>
        <dbReference type="ChEBI" id="CHEBI:57540"/>
    </ligand>
</feature>
<feature type="binding site" evidence="1">
    <location>
        <begin position="224"/>
        <end position="225"/>
    </location>
    <ligand>
        <name>NAD(+)</name>
        <dbReference type="ChEBI" id="CHEBI:57540"/>
    </ligand>
</feature>
<feature type="binding site" evidence="1">
    <location>
        <begin position="304"/>
        <end position="306"/>
    </location>
    <ligand>
        <name>NAD(+)</name>
        <dbReference type="ChEBI" id="CHEBI:57540"/>
    </ligand>
</feature>
<gene>
    <name evidence="1" type="primary">dlgD</name>
    <name type="ordered locus">SeAg_B3882</name>
</gene>
<organism>
    <name type="scientific">Salmonella agona (strain SL483)</name>
    <dbReference type="NCBI Taxonomy" id="454166"/>
    <lineage>
        <taxon>Bacteria</taxon>
        <taxon>Pseudomonadati</taxon>
        <taxon>Pseudomonadota</taxon>
        <taxon>Gammaproteobacteria</taxon>
        <taxon>Enterobacterales</taxon>
        <taxon>Enterobacteriaceae</taxon>
        <taxon>Salmonella</taxon>
    </lineage>
</organism>
<proteinExistence type="inferred from homology"/>